<proteinExistence type="evidence at protein level"/>
<reference key="1">
    <citation type="journal article" date="2002" name="Microbiology">
        <title>Molecular cloning and sequence analysis of the clorobiocin biosynthetic gene cluster: new insights into the biosynthesis of aminocoumarin antibiotics.</title>
        <authorList>
            <person name="Pojer F."/>
            <person name="Li S.M."/>
            <person name="Heide L."/>
        </authorList>
    </citation>
    <scope>NUCLEOTIDE SEQUENCE [GENOMIC DNA]</scope>
    <source>
        <strain>DS 12.976</strain>
    </source>
</reference>
<reference key="2">
    <citation type="journal article" date="2003" name="Proc. Natl. Acad. Sci. U.S.A.">
        <title>CloQ, a prenyltransferase involved in clorobiocin biosynthesis.</title>
        <authorList>
            <person name="Pojer F."/>
            <person name="Wemakor E."/>
            <person name="Kammerer B."/>
            <person name="Chen H."/>
            <person name="Walsh C.T."/>
            <person name="Li S.M."/>
            <person name="Heide L."/>
        </authorList>
    </citation>
    <scope>FUNCTION</scope>
    <scope>CATALYTIC ACTIVITY</scope>
    <scope>BIOPHYSICOCHEMICAL PROPERTIES</scope>
    <scope>PATHWAY</scope>
    <scope>SUBUNIT</scope>
    <source>
        <strain>DS 12.976</strain>
    </source>
</reference>
<reference key="3">
    <citation type="journal article" date="2004" name="J. Antibiot.">
        <title>New aminocoumarin antibiotics from a cloQ-defective mutant of the clorobiocin producer Streptomyces roseochromogenes DS12.976.</title>
        <authorList>
            <person name="Freitag A."/>
            <person name="Galm U."/>
            <person name="Li S.M."/>
            <person name="Heide L."/>
        </authorList>
    </citation>
    <scope>DISRUPTION PHENOTYPE</scope>
    <source>
        <strain>DS 12.976</strain>
    </source>
</reference>
<reference key="4">
    <citation type="journal article" date="2006" name="Acta Crystallogr. F">
        <title>Crystallization and preliminary X-ray analysis of the aromatic prenyltransferase CloQ from the clorobiocin biosynthetic cluster of Streptomyces roseochromogenes.</title>
        <authorList>
            <person name="Keller S."/>
            <person name="Pojer F."/>
            <person name="Heide L."/>
            <person name="Lawson D.M."/>
        </authorList>
    </citation>
    <scope>PRELIMINARY CRYSTALLIZATION</scope>
    <scope>SUBUNIT</scope>
</reference>
<reference key="5">
    <citation type="journal article" date="2010" name="J. Mol. Biol.">
        <title>Structure and mechanism of the magnesium-independent aromatic prenyltransferase CloQ from the clorobiocin biosynthetic pathway.</title>
        <authorList>
            <person name="Metzger U."/>
            <person name="Keller S."/>
            <person name="Stevenson C.E."/>
            <person name="Heide L."/>
            <person name="Lawson D.M."/>
        </authorList>
    </citation>
    <scope>X-RAY CRYSTALLOGRAPHY (1.85 ANGSTROMS) IN COMPLEX WITH 4-HYDROXYPHENYLPYRUVATE</scope>
    <scope>MUTAGENESIS OF LYS-54; ARG-66; PHE-68; ARG-160; CYS-215 AND GLU-281</scope>
    <source>
        <strain>DS 12.976</strain>
    </source>
</reference>
<feature type="chain" id="PRO_0000423992" description="4-hydroxyphenylpyruvate 3-dimethylallyltransferase">
    <location>
        <begin position="1"/>
        <end position="324"/>
    </location>
</feature>
<feature type="binding site">
    <location>
        <position position="160"/>
    </location>
    <ligand>
        <name>substrate</name>
    </ligand>
</feature>
<feature type="binding site">
    <location>
        <position position="281"/>
    </location>
    <ligand>
        <name>substrate</name>
    </ligand>
</feature>
<feature type="mutagenesis site" description="Abolishes prenyltransferase activity." evidence="4">
    <original>K</original>
    <variation>S</variation>
    <location>
        <position position="54"/>
    </location>
</feature>
<feature type="mutagenesis site" description="Abolishes prenyltransferase activity." evidence="4">
    <original>R</original>
    <variation>S</variation>
    <location>
        <position position="66"/>
    </location>
</feature>
<feature type="mutagenesis site" description="Almost abolishes prenyltransferase activity." evidence="4">
    <original>F</original>
    <variation>S</variation>
    <location>
        <position position="68"/>
    </location>
</feature>
<feature type="mutagenesis site" description="Impaired prenyltransferase activity." evidence="4">
    <original>R</original>
    <variation>A</variation>
    <variation>Q</variation>
    <location>
        <position position="160"/>
    </location>
</feature>
<feature type="mutagenesis site" description="Does not affect prenyltransferase activity." evidence="4">
    <original>C</original>
    <variation>A</variation>
    <variation>S</variation>
    <location>
        <position position="215"/>
    </location>
</feature>
<feature type="mutagenesis site" description="Abolishes prenyltransferase activity." evidence="4">
    <original>E</original>
    <variation>G</variation>
    <location>
        <position position="281"/>
    </location>
</feature>
<feature type="strand" evidence="8">
    <location>
        <begin position="7"/>
        <end position="9"/>
    </location>
</feature>
<feature type="helix" evidence="8">
    <location>
        <begin position="12"/>
        <end position="26"/>
    </location>
</feature>
<feature type="helix" evidence="8">
    <location>
        <begin position="32"/>
        <end position="48"/>
    </location>
</feature>
<feature type="strand" evidence="8">
    <location>
        <begin position="49"/>
        <end position="58"/>
    </location>
</feature>
<feature type="strand" evidence="8">
    <location>
        <begin position="64"/>
        <end position="68"/>
    </location>
</feature>
<feature type="helix" evidence="8">
    <location>
        <begin position="75"/>
        <end position="81"/>
    </location>
</feature>
<feature type="helix" evidence="8">
    <location>
        <begin position="92"/>
        <end position="104"/>
    </location>
</feature>
<feature type="strand" evidence="8">
    <location>
        <begin position="107"/>
        <end position="113"/>
    </location>
</feature>
<feature type="turn" evidence="8">
    <location>
        <begin position="114"/>
        <end position="116"/>
    </location>
</feature>
<feature type="strand" evidence="8">
    <location>
        <begin position="117"/>
        <end position="130"/>
    </location>
</feature>
<feature type="helix" evidence="8">
    <location>
        <begin position="131"/>
        <end position="135"/>
    </location>
</feature>
<feature type="helix" evidence="8">
    <location>
        <begin position="142"/>
        <end position="145"/>
    </location>
</feature>
<feature type="helix" evidence="8">
    <location>
        <begin position="148"/>
        <end position="153"/>
    </location>
</feature>
<feature type="strand" evidence="8">
    <location>
        <begin position="158"/>
        <end position="165"/>
    </location>
</feature>
<feature type="turn" evidence="8">
    <location>
        <begin position="166"/>
        <end position="169"/>
    </location>
</feature>
<feature type="strand" evidence="8">
    <location>
        <begin position="170"/>
        <end position="176"/>
    </location>
</feature>
<feature type="helix" evidence="8">
    <location>
        <begin position="183"/>
        <end position="191"/>
    </location>
</feature>
<feature type="turn" evidence="8">
    <location>
        <begin position="192"/>
        <end position="194"/>
    </location>
</feature>
<feature type="helix" evidence="8">
    <location>
        <begin position="200"/>
        <end position="208"/>
    </location>
</feature>
<feature type="strand" evidence="8">
    <location>
        <begin position="215"/>
        <end position="221"/>
    </location>
</feature>
<feature type="turn" evidence="8">
    <location>
        <begin position="222"/>
        <end position="224"/>
    </location>
</feature>
<feature type="strand" evidence="8">
    <location>
        <begin position="227"/>
        <end position="236"/>
    </location>
</feature>
<feature type="helix" evidence="8">
    <location>
        <begin position="239"/>
        <end position="241"/>
    </location>
</feature>
<feature type="helix" evidence="8">
    <location>
        <begin position="247"/>
        <end position="255"/>
    </location>
</feature>
<feature type="strand" evidence="9">
    <location>
        <begin position="260"/>
        <end position="262"/>
    </location>
</feature>
<feature type="strand" evidence="8">
    <location>
        <begin position="265"/>
        <end position="272"/>
    </location>
</feature>
<feature type="strand" evidence="8">
    <location>
        <begin position="277"/>
        <end position="286"/>
    </location>
</feature>
<feature type="helix" evidence="8">
    <location>
        <begin position="288"/>
        <end position="294"/>
    </location>
</feature>
<feature type="helix" evidence="8">
    <location>
        <begin position="307"/>
        <end position="314"/>
    </location>
</feature>
<organism>
    <name type="scientific">Streptomyces roseochromogenus subsp. oscitans</name>
    <dbReference type="NCBI Taxonomy" id="149682"/>
    <lineage>
        <taxon>Bacteria</taxon>
        <taxon>Bacillati</taxon>
        <taxon>Actinomycetota</taxon>
        <taxon>Actinomycetes</taxon>
        <taxon>Kitasatosporales</taxon>
        <taxon>Streptomycetaceae</taxon>
        <taxon>Streptomyces</taxon>
    </lineage>
</organism>
<sequence length="324" mass="35626">MPALPIDQEFDCERFRADIRATAAAIGAPIAHRLTDTVLEAFRDNFAQGATLWKTTSQPGDQLSYRFFSRLKMDTVSRAIDAGLLDAAHPTLAVVDAWSSLYGGAPVQSGDFDAGRGMAKTWLYFGGLRPAEDILTVPALPASVQARLKDFLALGLAHVRFAAVDWRHHSANVYFRGKGPLDTVQFARIHALSGSTPPAAHVVEEVLAYMPEDYCVAITLDLHSGDIERVCFYALKVPKNALPRIPTRIARFLEVAPSHDVEECNVIGWSFGRSGDYVKAERSYTGNMAEILAGWNCFFHGEEGRDHDLRALHQHTESTMGGAR</sequence>
<keyword id="KW-0002">3D-structure</keyword>
<keyword id="KW-0045">Antibiotic biosynthesis</keyword>
<keyword id="KW-0637">Prenyltransferase</keyword>
<keyword id="KW-0808">Transferase</keyword>
<protein>
    <recommendedName>
        <fullName evidence="6">4-hydroxyphenylpyruvate 3-dimethylallyltransferase</fullName>
        <ecNumber evidence="1">2.5.1.111</ecNumber>
    </recommendedName>
    <alternativeName>
        <fullName evidence="6">4HPP 3-dimethylallyltransferase</fullName>
    </alternativeName>
    <alternativeName>
        <fullName evidence="6">Aromatic prenyltransferase CloQ</fullName>
    </alternativeName>
    <alternativeName>
        <fullName evidence="5">Clorobiocin biosynthesis protein Q</fullName>
    </alternativeName>
</protein>
<dbReference type="EC" id="2.5.1.111" evidence="1"/>
<dbReference type="EMBL" id="AF329398">
    <property type="protein sequence ID" value="AAN65239.1"/>
    <property type="molecule type" value="Genomic_DNA"/>
</dbReference>
<dbReference type="PDB" id="2XLQ">
    <property type="method" value="X-ray"/>
    <property type="resolution" value="2.22 A"/>
    <property type="chains" value="A=1-324"/>
</dbReference>
<dbReference type="PDB" id="2XLY">
    <property type="method" value="X-ray"/>
    <property type="resolution" value="3.10 A"/>
    <property type="chains" value="A=1-324"/>
</dbReference>
<dbReference type="PDB" id="2XM5">
    <property type="method" value="X-ray"/>
    <property type="resolution" value="1.85 A"/>
    <property type="chains" value="A=1-324"/>
</dbReference>
<dbReference type="PDB" id="2XM7">
    <property type="method" value="X-ray"/>
    <property type="resolution" value="2.22 A"/>
    <property type="chains" value="A=1-324"/>
</dbReference>
<dbReference type="PDBsum" id="2XLQ"/>
<dbReference type="PDBsum" id="2XLY"/>
<dbReference type="PDBsum" id="2XM5"/>
<dbReference type="PDBsum" id="2XM7"/>
<dbReference type="SMR" id="Q8GHB2"/>
<dbReference type="KEGG" id="ag:AAN65239"/>
<dbReference type="BRENDA" id="2.5.1.111">
    <property type="organism ID" value="13262"/>
</dbReference>
<dbReference type="EvolutionaryTrace" id="Q8GHB2"/>
<dbReference type="GO" id="GO:0004659">
    <property type="term" value="F:prenyltransferase activity"/>
    <property type="evidence" value="ECO:0000314"/>
    <property type="project" value="UniProtKB"/>
</dbReference>
<dbReference type="GO" id="GO:0016765">
    <property type="term" value="F:transferase activity, transferring alkyl or aryl (other than methyl) groups"/>
    <property type="evidence" value="ECO:0000314"/>
    <property type="project" value="UniProtKB"/>
</dbReference>
<dbReference type="GO" id="GO:0017000">
    <property type="term" value="P:antibiotic biosynthetic process"/>
    <property type="evidence" value="ECO:0000314"/>
    <property type="project" value="UniProtKB"/>
</dbReference>
<dbReference type="CDD" id="cd13931">
    <property type="entry name" value="PT-CloQ_NphB"/>
    <property type="match status" value="1"/>
</dbReference>
<dbReference type="InterPro" id="IPR033964">
    <property type="entry name" value="Aro_prenylTrfase"/>
</dbReference>
<dbReference type="InterPro" id="IPR020965">
    <property type="entry name" value="Prenyltransferase_CloQ"/>
</dbReference>
<dbReference type="InterPro" id="IPR036239">
    <property type="entry name" value="PrenylTrfase-like_sf"/>
</dbReference>
<dbReference type="Pfam" id="PF11468">
    <property type="entry name" value="PTase_Orf2"/>
    <property type="match status" value="1"/>
</dbReference>
<dbReference type="SFLD" id="SFLDS00036">
    <property type="entry name" value="Aromatic_Prenyltransferase"/>
    <property type="match status" value="1"/>
</dbReference>
<dbReference type="SFLD" id="SFLDG01163">
    <property type="entry name" value="II"/>
    <property type="match status" value="1"/>
</dbReference>
<dbReference type="SUPFAM" id="SSF143492">
    <property type="entry name" value="Prenyltransferase-like"/>
    <property type="match status" value="1"/>
</dbReference>
<name>CLOQ_STRRC</name>
<gene>
    <name evidence="5" type="primary">cloQ</name>
</gene>
<evidence type="ECO:0000269" key="1">
    <source>
    </source>
</evidence>
<evidence type="ECO:0000269" key="2">
    <source>
    </source>
</evidence>
<evidence type="ECO:0000269" key="3">
    <source>
    </source>
</evidence>
<evidence type="ECO:0000269" key="4">
    <source>
    </source>
</evidence>
<evidence type="ECO:0000303" key="5">
    <source>
    </source>
</evidence>
<evidence type="ECO:0000303" key="6">
    <source>
    </source>
</evidence>
<evidence type="ECO:0000305" key="7"/>
<evidence type="ECO:0007829" key="8">
    <source>
        <dbReference type="PDB" id="2XM5"/>
    </source>
</evidence>
<evidence type="ECO:0007829" key="9">
    <source>
        <dbReference type="PDB" id="2XM7"/>
    </source>
</evidence>
<comment type="function">
    <text evidence="1">Magnesium-independent aromatic prenyltransferase that catalyzes the irreversible transfer of a dimethylallyl group to 4-hydroxyphenylpyruvate to produce the ring A structure in the clorobiocin biosynthesis pathway. Clorobiocin is an aminocoumarin family antibiotic.</text>
</comment>
<comment type="catalytic activity">
    <reaction evidence="1">
        <text>3-(4-hydroxyphenyl)pyruvate + dimethylallyl diphosphate = 3-dimethylallyl-4-hydroxyphenylpyruvate + diphosphate</text>
        <dbReference type="Rhea" id="RHEA:37055"/>
        <dbReference type="ChEBI" id="CHEBI:33019"/>
        <dbReference type="ChEBI" id="CHEBI:36242"/>
        <dbReference type="ChEBI" id="CHEBI:57623"/>
        <dbReference type="ChEBI" id="CHEBI:74408"/>
        <dbReference type="EC" id="2.5.1.111"/>
    </reaction>
</comment>
<comment type="biophysicochemical properties">
    <kinetics>
        <KM evidence="1">25 uM for 4-hydroxyphenylpyruvate</KM>
        <KM evidence="1">35 uM for dimethylallyl diphosphate</KM>
    </kinetics>
</comment>
<comment type="pathway">
    <text evidence="1">Antibiotic biosynthesis.</text>
</comment>
<comment type="subunit">
    <text evidence="1 3 4">Monomer.</text>
</comment>
<comment type="disruption phenotype">
    <text evidence="2">Cells lacking this gene produce antibiotic compounds (vanillobiocin, isovanillobiocin and declovanillobiocin) with a methoxy instead of the dimethylallyl group at the position 3 of the 4-hydroxybenzoic acid moiety of clorobiocin.</text>
</comment>
<comment type="similarity">
    <text evidence="7">Belongs to the aromatic prenyltransferase family.</text>
</comment>
<accession>Q8GHB2</accession>